<accession>Q8IZF4</accession>
<accession>A0A024R6S3</accession>
<accession>A8K9R8</accession>
<accession>B3KXZ5</accession>
<accession>Q6ZMH7</accession>
<accession>Q6ZML4</accession>
<accession>Q86SL8</accession>
<accession>Q8IZ14</accession>
<name>AGRG5_HUMAN</name>
<reference key="1">
    <citation type="journal article" date="2003" name="Genome Res.">
        <title>The secreted protein discovery initiative (SPDI), a large-scale effort to identify novel human secreted and transmembrane proteins: a bioinformatics assessment.</title>
        <authorList>
            <person name="Clark H.F."/>
            <person name="Gurney A.L."/>
            <person name="Abaya E."/>
            <person name="Baker K."/>
            <person name="Baldwin D.T."/>
            <person name="Brush J."/>
            <person name="Chen J."/>
            <person name="Chow B."/>
            <person name="Chui C."/>
            <person name="Crowley C."/>
            <person name="Currell B."/>
            <person name="Deuel B."/>
            <person name="Dowd P."/>
            <person name="Eaton D."/>
            <person name="Foster J.S."/>
            <person name="Grimaldi C."/>
            <person name="Gu Q."/>
            <person name="Hass P.E."/>
            <person name="Heldens S."/>
            <person name="Huang A."/>
            <person name="Kim H.S."/>
            <person name="Klimowski L."/>
            <person name="Jin Y."/>
            <person name="Johnson S."/>
            <person name="Lee J."/>
            <person name="Lewis L."/>
            <person name="Liao D."/>
            <person name="Mark M.R."/>
            <person name="Robbie E."/>
            <person name="Sanchez C."/>
            <person name="Schoenfeld J."/>
            <person name="Seshagiri S."/>
            <person name="Simmons L."/>
            <person name="Singh J."/>
            <person name="Smith V."/>
            <person name="Stinson J."/>
            <person name="Vagts A."/>
            <person name="Vandlen R.L."/>
            <person name="Watanabe C."/>
            <person name="Wieand D."/>
            <person name="Woods K."/>
            <person name="Xie M.-H."/>
            <person name="Yansura D.G."/>
            <person name="Yi S."/>
            <person name="Yu G."/>
            <person name="Yuan J."/>
            <person name="Zhang M."/>
            <person name="Zhang Z."/>
            <person name="Goddard A.D."/>
            <person name="Wood W.I."/>
            <person name="Godowski P.J."/>
            <person name="Gray A.M."/>
        </authorList>
    </citation>
    <scope>NUCLEOTIDE SEQUENCE [LARGE SCALE MRNA]</scope>
</reference>
<reference key="2">
    <citation type="journal article" date="2004" name="Nat. Genet.">
        <title>Complete sequencing and characterization of 21,243 full-length human cDNAs.</title>
        <authorList>
            <person name="Ota T."/>
            <person name="Suzuki Y."/>
            <person name="Nishikawa T."/>
            <person name="Otsuki T."/>
            <person name="Sugiyama T."/>
            <person name="Irie R."/>
            <person name="Wakamatsu A."/>
            <person name="Hayashi K."/>
            <person name="Sato H."/>
            <person name="Nagai K."/>
            <person name="Kimura K."/>
            <person name="Makita H."/>
            <person name="Sekine M."/>
            <person name="Obayashi M."/>
            <person name="Nishi T."/>
            <person name="Shibahara T."/>
            <person name="Tanaka T."/>
            <person name="Ishii S."/>
            <person name="Yamamoto J."/>
            <person name="Saito K."/>
            <person name="Kawai Y."/>
            <person name="Isono Y."/>
            <person name="Nakamura Y."/>
            <person name="Nagahari K."/>
            <person name="Murakami K."/>
            <person name="Yasuda T."/>
            <person name="Iwayanagi T."/>
            <person name="Wagatsuma M."/>
            <person name="Shiratori A."/>
            <person name="Sudo H."/>
            <person name="Hosoiri T."/>
            <person name="Kaku Y."/>
            <person name="Kodaira H."/>
            <person name="Kondo H."/>
            <person name="Sugawara M."/>
            <person name="Takahashi M."/>
            <person name="Kanda K."/>
            <person name="Yokoi T."/>
            <person name="Furuya T."/>
            <person name="Kikkawa E."/>
            <person name="Omura Y."/>
            <person name="Abe K."/>
            <person name="Kamihara K."/>
            <person name="Katsuta N."/>
            <person name="Sato K."/>
            <person name="Tanikawa M."/>
            <person name="Yamazaki M."/>
            <person name="Ninomiya K."/>
            <person name="Ishibashi T."/>
            <person name="Yamashita H."/>
            <person name="Murakawa K."/>
            <person name="Fujimori K."/>
            <person name="Tanai H."/>
            <person name="Kimata M."/>
            <person name="Watanabe M."/>
            <person name="Hiraoka S."/>
            <person name="Chiba Y."/>
            <person name="Ishida S."/>
            <person name="Ono Y."/>
            <person name="Takiguchi S."/>
            <person name="Watanabe S."/>
            <person name="Yosida M."/>
            <person name="Hotuta T."/>
            <person name="Kusano J."/>
            <person name="Kanehori K."/>
            <person name="Takahashi-Fujii A."/>
            <person name="Hara H."/>
            <person name="Tanase T.-O."/>
            <person name="Nomura Y."/>
            <person name="Togiya S."/>
            <person name="Komai F."/>
            <person name="Hara R."/>
            <person name="Takeuchi K."/>
            <person name="Arita M."/>
            <person name="Imose N."/>
            <person name="Musashino K."/>
            <person name="Yuuki H."/>
            <person name="Oshima A."/>
            <person name="Sasaki N."/>
            <person name="Aotsuka S."/>
            <person name="Yoshikawa Y."/>
            <person name="Matsunawa H."/>
            <person name="Ichihara T."/>
            <person name="Shiohata N."/>
            <person name="Sano S."/>
            <person name="Moriya S."/>
            <person name="Momiyama H."/>
            <person name="Satoh N."/>
            <person name="Takami S."/>
            <person name="Terashima Y."/>
            <person name="Suzuki O."/>
            <person name="Nakagawa S."/>
            <person name="Senoh A."/>
            <person name="Mizoguchi H."/>
            <person name="Goto Y."/>
            <person name="Shimizu F."/>
            <person name="Wakebe H."/>
            <person name="Hishigaki H."/>
            <person name="Watanabe T."/>
            <person name="Sugiyama A."/>
            <person name="Takemoto M."/>
            <person name="Kawakami B."/>
            <person name="Yamazaki M."/>
            <person name="Watanabe K."/>
            <person name="Kumagai A."/>
            <person name="Itakura S."/>
            <person name="Fukuzumi Y."/>
            <person name="Fujimori Y."/>
            <person name="Komiyama M."/>
            <person name="Tashiro H."/>
            <person name="Tanigami A."/>
            <person name="Fujiwara T."/>
            <person name="Ono T."/>
            <person name="Yamada K."/>
            <person name="Fujii Y."/>
            <person name="Ozaki K."/>
            <person name="Hirao M."/>
            <person name="Ohmori Y."/>
            <person name="Kawabata A."/>
            <person name="Hikiji T."/>
            <person name="Kobatake N."/>
            <person name="Inagaki H."/>
            <person name="Ikema Y."/>
            <person name="Okamoto S."/>
            <person name="Okitani R."/>
            <person name="Kawakami T."/>
            <person name="Noguchi S."/>
            <person name="Itoh T."/>
            <person name="Shigeta K."/>
            <person name="Senba T."/>
            <person name="Matsumura K."/>
            <person name="Nakajima Y."/>
            <person name="Mizuno T."/>
            <person name="Morinaga M."/>
            <person name="Sasaki M."/>
            <person name="Togashi T."/>
            <person name="Oyama M."/>
            <person name="Hata H."/>
            <person name="Watanabe M."/>
            <person name="Komatsu T."/>
            <person name="Mizushima-Sugano J."/>
            <person name="Satoh T."/>
            <person name="Shirai Y."/>
            <person name="Takahashi Y."/>
            <person name="Nakagawa K."/>
            <person name="Okumura K."/>
            <person name="Nagase T."/>
            <person name="Nomura N."/>
            <person name="Kikuchi H."/>
            <person name="Masuho Y."/>
            <person name="Yamashita R."/>
            <person name="Nakai K."/>
            <person name="Yada T."/>
            <person name="Nakamura Y."/>
            <person name="Ohara O."/>
            <person name="Isogai T."/>
            <person name="Sugano S."/>
        </authorList>
    </citation>
    <scope>NUCLEOTIDE SEQUENCE [LARGE SCALE MRNA]</scope>
    <source>
        <tissue>Colon</tissue>
        <tissue>Spleen</tissue>
        <tissue>Thymus</tissue>
        <tissue>Trachea</tissue>
    </source>
</reference>
<reference key="3">
    <citation type="submission" date="2005-07" db="EMBL/GenBank/DDBJ databases">
        <authorList>
            <person name="Mural R.J."/>
            <person name="Istrail S."/>
            <person name="Sutton G.G."/>
            <person name="Florea L."/>
            <person name="Halpern A.L."/>
            <person name="Mobarry C.M."/>
            <person name="Lippert R."/>
            <person name="Walenz B."/>
            <person name="Shatkay H."/>
            <person name="Dew I."/>
            <person name="Miller J.R."/>
            <person name="Flanigan M.J."/>
            <person name="Edwards N.J."/>
            <person name="Bolanos R."/>
            <person name="Fasulo D."/>
            <person name="Halldorsson B.V."/>
            <person name="Hannenhalli S."/>
            <person name="Turner R."/>
            <person name="Yooseph S."/>
            <person name="Lu F."/>
            <person name="Nusskern D.R."/>
            <person name="Shue B.C."/>
            <person name="Zheng X.H."/>
            <person name="Zhong F."/>
            <person name="Delcher A.L."/>
            <person name="Huson D.H."/>
            <person name="Kravitz S.A."/>
            <person name="Mouchard L."/>
            <person name="Reinert K."/>
            <person name="Remington K.A."/>
            <person name="Clark A.G."/>
            <person name="Waterman M.S."/>
            <person name="Eichler E.E."/>
            <person name="Adams M.D."/>
            <person name="Hunkapiller M.W."/>
            <person name="Myers E.W."/>
            <person name="Venter J.C."/>
        </authorList>
    </citation>
    <scope>NUCLEOTIDE SEQUENCE [LARGE SCALE GENOMIC DNA]</scope>
</reference>
<reference key="4">
    <citation type="journal article" date="2004" name="Genome Res.">
        <title>The status, quality, and expansion of the NIH full-length cDNA project: the Mammalian Gene Collection (MGC).</title>
        <authorList>
            <consortium name="The MGC Project Team"/>
        </authorList>
    </citation>
    <scope>NUCLEOTIDE SEQUENCE [LARGE SCALE MRNA]</scope>
    <source>
        <tissue>Blood</tissue>
    </source>
</reference>
<reference key="5">
    <citation type="journal article" date="2003" name="Proc. Natl. Acad. Sci. U.S.A.">
        <title>The G protein-coupled receptor repertoires of human and mouse.</title>
        <authorList>
            <person name="Vassilatis D.K."/>
            <person name="Hohmann J.G."/>
            <person name="Zeng H."/>
            <person name="Li F."/>
            <person name="Ranchalis J.E."/>
            <person name="Mortrud M.T."/>
            <person name="Brown A."/>
            <person name="Rodriguez S.S."/>
            <person name="Weller J.R."/>
            <person name="Wright A.C."/>
            <person name="Bergmann J.E."/>
            <person name="Gaitanaris G.A."/>
        </authorList>
    </citation>
    <scope>NUCLEOTIDE SEQUENCE [LARGE SCALE MRNA] OF 191-225</scope>
</reference>
<reference key="6">
    <citation type="journal article" date="2002" name="FEBS Lett.">
        <title>Novel human G protein-coupled receptors with long N-terminals containing GPS domains and Ser/Thr-rich regions.</title>
        <authorList>
            <person name="Fredriksson R."/>
            <person name="Lagerstroem M.C."/>
            <person name="Hoeglund P.J."/>
            <person name="Schioeth H.B."/>
        </authorList>
    </citation>
    <scope>IDENTIFICATION</scope>
</reference>
<reference key="7">
    <citation type="journal article" date="2011" name="J. Leukoc. Biol.">
        <title>Specific expression of GPR56 by human cytotoxic lymphocytes.</title>
        <authorList>
            <person name="Peng Y.M."/>
            <person name="van de Garde M.D."/>
            <person name="Cheng K.F."/>
            <person name="Baars P.A."/>
            <person name="Remmerswaal E.B."/>
            <person name="van Lier R.A."/>
            <person name="Mackay C.R."/>
            <person name="Lin H.H."/>
            <person name="Hamann J."/>
        </authorList>
    </citation>
    <scope>TISSUE SPECIFICITY</scope>
</reference>
<reference key="8">
    <citation type="journal article" date="2015" name="Pharmacol. Rev.">
        <title>International union of basic and clinical pharmacology. XCIV. Adhesion G protein-coupled receptors.</title>
        <authorList>
            <person name="Hamann J."/>
            <person name="Aust G."/>
            <person name="Arac D."/>
            <person name="Engel F.B."/>
            <person name="Formstone C."/>
            <person name="Fredriksson R."/>
            <person name="Hall R.A."/>
            <person name="Harty B.L."/>
            <person name="Kirchhoff C."/>
            <person name="Knapp B."/>
            <person name="Krishnan A."/>
            <person name="Liebscher I."/>
            <person name="Lin H.H."/>
            <person name="Martinelli D.C."/>
            <person name="Monk K.R."/>
            <person name="Peeters M.C."/>
            <person name="Piao X."/>
            <person name="Promel S."/>
            <person name="Schoneberg T."/>
            <person name="Schwartz T.W."/>
            <person name="Singer K."/>
            <person name="Stacey M."/>
            <person name="Ushkaryov Y.A."/>
            <person name="Vallon M."/>
            <person name="Wolfrum U."/>
            <person name="Wright M.W."/>
            <person name="Xu L."/>
            <person name="Langenhan T."/>
            <person name="Schioth H.B."/>
        </authorList>
    </citation>
    <scope>REVIEW</scope>
    <scope>NOMENCLATURE</scope>
</reference>
<reference key="9">
    <citation type="journal article" date="2023" name="J. Biol. Chem.">
        <title>GPR114/ADGRG5 is activated by its tethered peptide agonist because it is a cleaved adhesion GPCR.</title>
        <authorList>
            <person name="Bernadyn T.F."/>
            <person name="Vizurraga A."/>
            <person name="Adhikari R."/>
            <person name="Kwarcinski F."/>
            <person name="Tall G.G."/>
        </authorList>
    </citation>
    <scope>FUNCTION</scope>
    <scope>SUBUNIT</scope>
    <scope>PROTEOLYTIC CLEAVAGE</scope>
    <scope>DOMAIN</scope>
    <scope>GLYCOSYLATION</scope>
    <scope>MUTAGENESIS OF HIS-225 AND ALA-230</scope>
</reference>
<reference evidence="14" key="10">
    <citation type="journal article" date="2022" name="Nature">
        <title>Structural basis for the tethered peptide activation of adhesion GPCRs.</title>
        <authorList>
            <person name="Ping Y.Q."/>
            <person name="Xiao P."/>
            <person name="Yang F."/>
            <person name="Zhao R.J."/>
            <person name="Guo S.C."/>
            <person name="Yan X."/>
            <person name="Wu X."/>
            <person name="Zhang C."/>
            <person name="Lu Y."/>
            <person name="Zhao F."/>
            <person name="Zhou F."/>
            <person name="Xi Y.T."/>
            <person name="Yin W."/>
            <person name="Liu F.Z."/>
            <person name="He D.F."/>
            <person name="Zhang D.L."/>
            <person name="Zhu Z.L."/>
            <person name="Jiang Y."/>
            <person name="Du L."/>
            <person name="Feng S.Q."/>
            <person name="Schoneberg T."/>
            <person name="Liebscher I."/>
            <person name="Xu H.E."/>
            <person name="Sun J.P."/>
        </authorList>
    </citation>
    <scope>STRUCTURE BY ELECTRON MICROSCOPY (3.30 ANGSTROMS) OF 227-528 IN COMPLEX WITH GNAS; GNB1 AND GNG2</scope>
    <scope>ACTIVITY REGULATION</scope>
    <scope>DOMAIN</scope>
    <scope>DISULFIDE BOND</scope>
</reference>
<comment type="function">
    <text evidence="6">Orphan adhesion G-protein coupled receptor (aGPCR) (PubMed:37673336). Ligand binding causes a conformation change that triggers signaling via guanine nucleotide-binding proteins (G proteins) and modulates the activity of downstream effectors, such as adenylate cyclase (PubMed:37673336). ADGRG5 is specifically coupled to G(s) G proteins and mediates activation of adenylate cyclase activity (PubMed:37673336).</text>
</comment>
<comment type="activity regulation">
    <text evidence="5">Forms a heterodimer of 2 chains generated by proteolytic processing that remain associated through non-covalent interactions mediated by the GAIN-B domain (PubMed:35418678). In the inactivated receptor, the Stachel sequence (also named stalk) is embedded in the GAIN-B domain, where it adopts a beta-strand conformation (PubMed:35418678). On activation, the Stachel moves into the 7 transmembrane region and adopts a twisted hook-shaped configuration that forms contacts within the receptor, leading to coupling of a G-alpha protein, which activates signaling (PubMed:35418678). The cleaved GAIN-B and N-terminal domains can then dissociate from the rest of the receptor (PubMed:35418678).</text>
</comment>
<comment type="subunit">
    <text evidence="3 6">Heterodimer of 2 chains generated by proteolytic processing; the large extracellular N-terminal fragment and the membrane-bound C-terminal fragment predominantly remain associated and non-covalently linked.</text>
</comment>
<comment type="subcellular location">
    <subcellularLocation>
        <location evidence="1">Cell membrane</location>
        <topology evidence="5">Multi-pass membrane protein</topology>
    </subcellularLocation>
</comment>
<comment type="tissue specificity">
    <text evidence="4">Expressed in immune cells. Primarily found in granulocytes. Found in eosinophils.</text>
</comment>
<comment type="domain">
    <text evidence="5 6">The Stachel sequence (also named stalk) in the C-terminal part of the extracellular domain (ECD) functions as a tethered agonist (PubMed:35418678, PubMed:37673336). In the inactivated receptor, the Stachel sequence (also named stalk) is embedded in the GAIN-B domain, where it adopts a beta-strand conformation (PubMed:35418678). On activation, the Stachel moves into the 7 transmembrane region and adopts a twisted hook-shaped configuration that forms contacts within the receptor, leading to coupling of a G-alpha protein, which activates signaling (PubMed:35418678).</text>
</comment>
<comment type="PTM">
    <text evidence="3 6">Autoproteolytically processed at the GPS region of the GAIN-B domain; this cleavage modulates receptor activity.</text>
</comment>
<comment type="PTM">
    <text evidence="6">N-glycsylated.</text>
</comment>
<comment type="similarity">
    <text evidence="11">Belongs to the G-protein coupled receptor 2 family. Adhesion G-protein coupled receptor (ADGR) subfamily.</text>
</comment>
<comment type="sequence caution" evidence="11">
    <conflict type="erroneous gene model prediction">
        <sequence resource="EMBL-CDS" id="AAN46670"/>
    </conflict>
</comment>
<comment type="sequence caution" evidence="11">
    <conflict type="erroneous initiation">
        <sequence resource="EMBL-CDS" id="BAD18748"/>
    </conflict>
</comment>
<protein>
    <recommendedName>
        <fullName evidence="11">Adhesion G-protein coupled receptor G5</fullName>
    </recommendedName>
    <alternativeName>
        <fullName evidence="9">G-protein coupled receptor 114</fullName>
    </alternativeName>
    <alternativeName>
        <fullName>G-protein coupled receptor PGR27</fullName>
    </alternativeName>
    <component>
        <recommendedName>
            <fullName evidence="11">Adhesion G-protein coupled receptor G5, N-terminal fragment</fullName>
            <shortName evidence="11">ADGRG5 N-terminal fragment</shortName>
        </recommendedName>
    </component>
    <component>
        <recommendedName>
            <fullName evidence="11">Adhesion G-protein coupled receptor G5, C-terminal fragment</fullName>
            <shortName evidence="11">ADGRG5 C-terminal fragment</shortName>
        </recommendedName>
    </component>
</protein>
<feature type="signal peptide" evidence="2">
    <location>
        <begin position="1"/>
        <end position="21"/>
    </location>
</feature>
<feature type="chain" id="PRO_0000012894" description="Adhesion G-protein coupled receptor G5">
    <location>
        <begin position="22"/>
        <end position="528"/>
    </location>
</feature>
<feature type="chain" id="PRO_0000462391" description="Adhesion G-protein coupled receptor G5, N-terminal fragment" evidence="11">
    <location>
        <begin position="22"/>
        <end position="226"/>
    </location>
</feature>
<feature type="chain" id="PRO_0000462392" description="Adhesion G-protein coupled receptor G5, C-terminal fragment" evidence="11">
    <location>
        <begin position="227"/>
        <end position="528"/>
    </location>
</feature>
<feature type="topological domain" description="Extracellular" evidence="5 14">
    <location>
        <begin position="22"/>
        <end position="245"/>
    </location>
</feature>
<feature type="transmembrane region" description="Helical; Name=1" evidence="5 14">
    <location>
        <begin position="246"/>
        <end position="271"/>
    </location>
</feature>
<feature type="topological domain" description="Cytoplasmic" evidence="5 14">
    <location>
        <begin position="272"/>
        <end position="280"/>
    </location>
</feature>
<feature type="transmembrane region" description="Helical; Name=2" evidence="5 14">
    <location>
        <begin position="281"/>
        <end position="304"/>
    </location>
</feature>
<feature type="topological domain" description="Extracellular" evidence="5 14">
    <location>
        <begin position="305"/>
        <end position="314"/>
    </location>
</feature>
<feature type="transmembrane region" description="Helical; Name=3" evidence="5 14">
    <location>
        <begin position="315"/>
        <end position="340"/>
    </location>
</feature>
<feature type="topological domain" description="Cytoplasmic" evidence="5 14">
    <location>
        <begin position="341"/>
        <end position="353"/>
    </location>
</feature>
<feature type="transmembrane region" description="Helical; Name=4" evidence="5 14">
    <location>
        <begin position="354"/>
        <end position="377"/>
    </location>
</feature>
<feature type="topological domain" description="Extracellular" evidence="5 14">
    <location>
        <begin position="378"/>
        <end position="410"/>
    </location>
</feature>
<feature type="transmembrane region" description="Helical; Name=5" evidence="5 14">
    <location>
        <begin position="411"/>
        <end position="435"/>
    </location>
</feature>
<feature type="topological domain" description="Cytoplasmic" evidence="5 14">
    <location>
        <begin position="436"/>
        <end position="455"/>
    </location>
</feature>
<feature type="transmembrane region" description="Helical; Name=6" evidence="5 14">
    <location>
        <begin position="456"/>
        <end position="477"/>
    </location>
</feature>
<feature type="topological domain" description="Extracellular" evidence="5 14">
    <location>
        <begin position="478"/>
        <end position="481"/>
    </location>
</feature>
<feature type="transmembrane region" description="Helical; Name=7" evidence="5 14">
    <location>
        <begin position="482"/>
        <end position="505"/>
    </location>
</feature>
<feature type="topological domain" description="Cytoplasmic" evidence="5 14">
    <location>
        <begin position="506"/>
        <end position="528"/>
    </location>
</feature>
<feature type="domain" description="GAIN-B" evidence="3">
    <location>
        <begin position="78"/>
        <end position="239"/>
    </location>
</feature>
<feature type="region of interest" description="GPS" evidence="3">
    <location>
        <begin position="189"/>
        <end position="239"/>
    </location>
</feature>
<feature type="region of interest" description="Stachel" evidence="12">
    <location>
        <begin position="228"/>
        <end position="236"/>
    </location>
</feature>
<feature type="site" description="Cleavage; by autolysis" evidence="3 8">
    <location>
        <begin position="226"/>
        <end position="227"/>
    </location>
</feature>
<feature type="glycosylation site" description="N-linked (GlcNAc...) asparagine" evidence="2">
    <location>
        <position position="58"/>
    </location>
</feature>
<feature type="glycosylation site" description="N-linked (GlcNAc...) asparagine" evidence="2">
    <location>
        <position position="65"/>
    </location>
</feature>
<feature type="glycosylation site" description="N-linked (GlcNAc...) asparagine" evidence="2">
    <location>
        <position position="146"/>
    </location>
</feature>
<feature type="glycosylation site" description="N-linked (GlcNAc...) asparagine" evidence="2">
    <location>
        <position position="147"/>
    </location>
</feature>
<feature type="glycosylation site" description="N-linked (GlcNAc...) asparagine" evidence="2">
    <location>
        <position position="173"/>
    </location>
</feature>
<feature type="glycosylation site" description="N-linked (GlcNAc...) asparagine" evidence="2">
    <location>
        <position position="179"/>
    </location>
</feature>
<feature type="glycosylation site" description="N-linked (GlcNAc...) asparagine" evidence="2">
    <location>
        <position position="394"/>
    </location>
</feature>
<feature type="glycosylation site" description="N-linked (GlcNAc...) asparagine" evidence="2">
    <location>
        <position position="400"/>
    </location>
</feature>
<feature type="disulfide bond" evidence="3">
    <location>
        <begin position="189"/>
        <end position="221"/>
    </location>
</feature>
<feature type="disulfide bond" evidence="3">
    <location>
        <begin position="209"/>
        <end position="223"/>
    </location>
</feature>
<feature type="disulfide bond" evidence="5 14">
    <location>
        <begin position="314"/>
        <end position="404"/>
    </location>
</feature>
<feature type="mutagenesis site" description="Abolished autoproteolytically processing." evidence="6">
    <original>H</original>
    <variation>S</variation>
    <location>
        <position position="225"/>
    </location>
</feature>
<feature type="mutagenesis site" description="Impaired G protein-coupled receptor activity." evidence="6">
    <original>A</original>
    <variation>M</variation>
    <location>
        <position position="230"/>
    </location>
</feature>
<feature type="sequence conflict" description="In Ref. 2; BAD18711." evidence="11" ref="2">
    <original>WHNQSL</original>
    <variation>PSISTQ</variation>
    <location>
        <begin position="177"/>
        <end position="182"/>
    </location>
</feature>
<feature type="sequence conflict" description="In Ref. 2; BAF85472." evidence="11" ref="2">
    <original>F</original>
    <variation>S</variation>
    <location>
        <position position="229"/>
    </location>
</feature>
<feature type="sequence conflict" description="In Ref. 2; BAF85472." evidence="11" ref="2">
    <original>I</original>
    <variation>T</variation>
    <location>
        <position position="251"/>
    </location>
</feature>
<feature type="helix" evidence="15">
    <location>
        <begin position="229"/>
        <end position="232"/>
    </location>
</feature>
<feature type="strand" evidence="15">
    <location>
        <begin position="242"/>
        <end position="244"/>
    </location>
</feature>
<feature type="helix" evidence="15">
    <location>
        <begin position="245"/>
        <end position="272"/>
    </location>
</feature>
<feature type="helix" evidence="15">
    <location>
        <begin position="281"/>
        <end position="298"/>
    </location>
</feature>
<feature type="helix" evidence="15">
    <location>
        <begin position="300"/>
        <end position="303"/>
    </location>
</feature>
<feature type="helix" evidence="15">
    <location>
        <begin position="313"/>
        <end position="343"/>
    </location>
</feature>
<feature type="helix" evidence="15">
    <location>
        <begin position="354"/>
        <end position="363"/>
    </location>
</feature>
<feature type="turn" evidence="15">
    <location>
        <begin position="364"/>
        <end position="370"/>
    </location>
</feature>
<feature type="helix" evidence="15">
    <location>
        <begin position="371"/>
        <end position="375"/>
    </location>
</feature>
<feature type="turn" evidence="15">
    <location>
        <begin position="391"/>
        <end position="396"/>
    </location>
</feature>
<feature type="turn" evidence="15">
    <location>
        <begin position="409"/>
        <end position="411"/>
    </location>
</feature>
<feature type="helix" evidence="15">
    <location>
        <begin position="412"/>
        <end position="416"/>
    </location>
</feature>
<feature type="helix" evidence="15">
    <location>
        <begin position="417"/>
        <end position="441"/>
    </location>
</feature>
<feature type="helix" evidence="15">
    <location>
        <begin position="457"/>
        <end position="466"/>
    </location>
</feature>
<feature type="helix" evidence="15">
    <location>
        <begin position="469"/>
        <end position="472"/>
    </location>
</feature>
<feature type="helix" evidence="15">
    <location>
        <begin position="481"/>
        <end position="492"/>
    </location>
</feature>
<feature type="helix" evidence="15">
    <location>
        <begin position="495"/>
        <end position="519"/>
    </location>
</feature>
<proteinExistence type="evidence at protein level"/>
<dbReference type="EMBL" id="AY358447">
    <property type="protein sequence ID" value="AAQ88812.1"/>
    <property type="molecule type" value="mRNA"/>
</dbReference>
<dbReference type="EMBL" id="AK128298">
    <property type="protein sequence ID" value="BAG54657.1"/>
    <property type="molecule type" value="mRNA"/>
</dbReference>
<dbReference type="EMBL" id="AK160368">
    <property type="protein sequence ID" value="BAD18711.1"/>
    <property type="molecule type" value="mRNA"/>
</dbReference>
<dbReference type="EMBL" id="AK172765">
    <property type="protein sequence ID" value="BAD18748.1"/>
    <property type="status" value="ALT_INIT"/>
    <property type="molecule type" value="mRNA"/>
</dbReference>
<dbReference type="EMBL" id="AK292783">
    <property type="protein sequence ID" value="BAF85472.1"/>
    <property type="molecule type" value="mRNA"/>
</dbReference>
<dbReference type="EMBL" id="CH471092">
    <property type="protein sequence ID" value="EAW82936.1"/>
    <property type="molecule type" value="Genomic_DNA"/>
</dbReference>
<dbReference type="EMBL" id="CH471092">
    <property type="protein sequence ID" value="EAW82938.1"/>
    <property type="molecule type" value="Genomic_DNA"/>
</dbReference>
<dbReference type="EMBL" id="BC032401">
    <property type="protein sequence ID" value="AAH32401.1"/>
    <property type="molecule type" value="mRNA"/>
</dbReference>
<dbReference type="EMBL" id="AY255609">
    <property type="protein sequence ID" value="AAO85121.1"/>
    <property type="molecule type" value="mRNA"/>
</dbReference>
<dbReference type="EMBL" id="AY140956">
    <property type="protein sequence ID" value="AAN46670.1"/>
    <property type="status" value="ALT_SEQ"/>
    <property type="molecule type" value="mRNA"/>
</dbReference>
<dbReference type="CCDS" id="CCDS10785.1"/>
<dbReference type="RefSeq" id="NP_001291305.1">
    <property type="nucleotide sequence ID" value="NM_001304376.3"/>
</dbReference>
<dbReference type="RefSeq" id="NP_001305410.1">
    <property type="nucleotide sequence ID" value="NM_001318481.1"/>
</dbReference>
<dbReference type="RefSeq" id="NP_722579.1">
    <property type="nucleotide sequence ID" value="NM_153837.4"/>
</dbReference>
<dbReference type="RefSeq" id="XP_011521251.1">
    <property type="nucleotide sequence ID" value="XM_011522949.2"/>
</dbReference>
<dbReference type="RefSeq" id="XP_011521252.1">
    <property type="nucleotide sequence ID" value="XM_011522950.3"/>
</dbReference>
<dbReference type="RefSeq" id="XP_054235791.1">
    <property type="nucleotide sequence ID" value="XM_054379816.1"/>
</dbReference>
<dbReference type="PDB" id="7EQ1">
    <property type="method" value="EM"/>
    <property type="resolution" value="3.30 A"/>
    <property type="chains" value="R=227-528"/>
</dbReference>
<dbReference type="PDBsum" id="7EQ1"/>
<dbReference type="EMDB" id="EMD-31254"/>
<dbReference type="SMR" id="Q8IZF4"/>
<dbReference type="BioGRID" id="128696">
    <property type="interactions" value="193"/>
</dbReference>
<dbReference type="FunCoup" id="Q8IZF4">
    <property type="interactions" value="158"/>
</dbReference>
<dbReference type="IntAct" id="Q8IZF4">
    <property type="interactions" value="93"/>
</dbReference>
<dbReference type="STRING" id="9606.ENSP00000342981"/>
<dbReference type="ChEMBL" id="CHEMBL4523890"/>
<dbReference type="MEROPS" id="P02.016"/>
<dbReference type="GlyCosmos" id="Q8IZF4">
    <property type="glycosylation" value="8 sites, No reported glycans"/>
</dbReference>
<dbReference type="GlyGen" id="Q8IZF4">
    <property type="glycosylation" value="8 sites"/>
</dbReference>
<dbReference type="iPTMnet" id="Q8IZF4"/>
<dbReference type="PhosphoSitePlus" id="Q8IZF4"/>
<dbReference type="BioMuta" id="ADGRG5"/>
<dbReference type="DMDM" id="148886621"/>
<dbReference type="MassIVE" id="Q8IZF4"/>
<dbReference type="PaxDb" id="9606-ENSP00000342981"/>
<dbReference type="PeptideAtlas" id="Q8IZF4"/>
<dbReference type="ProteomicsDB" id="71342"/>
<dbReference type="Antibodypedia" id="1937">
    <property type="antibodies" value="68 antibodies from 22 providers"/>
</dbReference>
<dbReference type="DNASU" id="221188"/>
<dbReference type="Ensembl" id="ENST00000340339.4">
    <property type="protein sequence ID" value="ENSP00000342981.4"/>
    <property type="gene ID" value="ENSG00000159618.16"/>
</dbReference>
<dbReference type="Ensembl" id="ENST00000349457.8">
    <property type="protein sequence ID" value="ENSP00000290823.4"/>
    <property type="gene ID" value="ENSG00000159618.16"/>
</dbReference>
<dbReference type="GeneID" id="221188"/>
<dbReference type="KEGG" id="hsa:221188"/>
<dbReference type="MANE-Select" id="ENST00000349457.8">
    <property type="protein sequence ID" value="ENSP00000290823.4"/>
    <property type="RefSeq nucleotide sequence ID" value="NM_001304376.3"/>
    <property type="RefSeq protein sequence ID" value="NP_001291305.1"/>
</dbReference>
<dbReference type="UCSC" id="uc002elx.5">
    <property type="organism name" value="human"/>
</dbReference>
<dbReference type="AGR" id="HGNC:19010"/>
<dbReference type="CTD" id="221188"/>
<dbReference type="DisGeNET" id="221188"/>
<dbReference type="GeneCards" id="ADGRG5"/>
<dbReference type="HGNC" id="HGNC:19010">
    <property type="gene designation" value="ADGRG5"/>
</dbReference>
<dbReference type="HPA" id="ENSG00000159618">
    <property type="expression patterns" value="Group enriched (intestine, lymphoid tissue)"/>
</dbReference>
<dbReference type="MIM" id="616965">
    <property type="type" value="gene"/>
</dbReference>
<dbReference type="neXtProt" id="NX_Q8IZF4"/>
<dbReference type="OpenTargets" id="ENSG00000159618"/>
<dbReference type="PharmGKB" id="PA134896363"/>
<dbReference type="VEuPathDB" id="HostDB:ENSG00000159618"/>
<dbReference type="eggNOG" id="KOG4193">
    <property type="taxonomic scope" value="Eukaryota"/>
</dbReference>
<dbReference type="GeneTree" id="ENSGT00940000161359"/>
<dbReference type="HOGENOM" id="CLU_002753_3_9_1"/>
<dbReference type="InParanoid" id="Q8IZF4"/>
<dbReference type="OMA" id="RIHVNLH"/>
<dbReference type="OrthoDB" id="283575at2759"/>
<dbReference type="PAN-GO" id="Q8IZF4">
    <property type="GO annotations" value="3 GO annotations based on evolutionary models"/>
</dbReference>
<dbReference type="PhylomeDB" id="Q8IZF4"/>
<dbReference type="TreeFam" id="TF321769"/>
<dbReference type="PathwayCommons" id="Q8IZF4"/>
<dbReference type="SignaLink" id="Q8IZF4"/>
<dbReference type="BioGRID-ORCS" id="221188">
    <property type="hits" value="20 hits in 1148 CRISPR screens"/>
</dbReference>
<dbReference type="ChiTaRS" id="ADGRG5">
    <property type="organism name" value="human"/>
</dbReference>
<dbReference type="GeneWiki" id="GPR114"/>
<dbReference type="GenomeRNAi" id="221188"/>
<dbReference type="Pharos" id="Q8IZF4">
    <property type="development level" value="Tdark"/>
</dbReference>
<dbReference type="PRO" id="PR:Q8IZF4"/>
<dbReference type="Proteomes" id="UP000005640">
    <property type="component" value="Chromosome 16"/>
</dbReference>
<dbReference type="RNAct" id="Q8IZF4">
    <property type="molecule type" value="protein"/>
</dbReference>
<dbReference type="Bgee" id="ENSG00000159618">
    <property type="expression patterns" value="Expressed in granulocyte and 99 other cell types or tissues"/>
</dbReference>
<dbReference type="ExpressionAtlas" id="Q8IZF4">
    <property type="expression patterns" value="baseline and differential"/>
</dbReference>
<dbReference type="GO" id="GO:0016020">
    <property type="term" value="C:membrane"/>
    <property type="evidence" value="ECO:0000304"/>
    <property type="project" value="GDB"/>
</dbReference>
<dbReference type="GO" id="GO:0005886">
    <property type="term" value="C:plasma membrane"/>
    <property type="evidence" value="ECO:0000250"/>
    <property type="project" value="UniProtKB"/>
</dbReference>
<dbReference type="GO" id="GO:0004930">
    <property type="term" value="F:G protein-coupled receptor activity"/>
    <property type="evidence" value="ECO:0000314"/>
    <property type="project" value="UniProtKB"/>
</dbReference>
<dbReference type="GO" id="GO:0007189">
    <property type="term" value="P:adenylate cyclase-activating G protein-coupled receptor signaling pathway"/>
    <property type="evidence" value="ECO:0000314"/>
    <property type="project" value="UniProtKB"/>
</dbReference>
<dbReference type="GO" id="GO:0007166">
    <property type="term" value="P:cell surface receptor signaling pathway"/>
    <property type="evidence" value="ECO:0007669"/>
    <property type="project" value="InterPro"/>
</dbReference>
<dbReference type="GO" id="GO:0007186">
    <property type="term" value="P:G protein-coupled receptor signaling pathway"/>
    <property type="evidence" value="ECO:0000304"/>
    <property type="project" value="GDB"/>
</dbReference>
<dbReference type="CDD" id="cd15443">
    <property type="entry name" value="7tmB2_GPR114"/>
    <property type="match status" value="1"/>
</dbReference>
<dbReference type="FunFam" id="1.20.1070.10:FF:000249">
    <property type="entry name" value="Adhesion G protein-coupled receptor G5"/>
    <property type="match status" value="1"/>
</dbReference>
<dbReference type="FunFam" id="2.60.220.50:FF:000026">
    <property type="entry name" value="Adhesion G protein-coupled receptor G5"/>
    <property type="match status" value="1"/>
</dbReference>
<dbReference type="Gene3D" id="2.60.220.50">
    <property type="match status" value="1"/>
</dbReference>
<dbReference type="Gene3D" id="1.20.1070.10">
    <property type="entry name" value="Rhodopsin 7-helix transmembrane proteins"/>
    <property type="match status" value="1"/>
</dbReference>
<dbReference type="InterPro" id="IPR057244">
    <property type="entry name" value="GAIN_B"/>
</dbReference>
<dbReference type="InterPro" id="IPR046338">
    <property type="entry name" value="GAIN_dom_sf"/>
</dbReference>
<dbReference type="InterPro" id="IPR017981">
    <property type="entry name" value="GPCR_2-like_7TM"/>
</dbReference>
<dbReference type="InterPro" id="IPR000832">
    <property type="entry name" value="GPCR_2_secretin-like"/>
</dbReference>
<dbReference type="InterPro" id="IPR003910">
    <property type="entry name" value="GPR1/GPR3/GPR5"/>
</dbReference>
<dbReference type="InterPro" id="IPR000203">
    <property type="entry name" value="GPS"/>
</dbReference>
<dbReference type="PANTHER" id="PTHR12011">
    <property type="entry name" value="ADHESION G-PROTEIN COUPLED RECEPTOR"/>
    <property type="match status" value="1"/>
</dbReference>
<dbReference type="PANTHER" id="PTHR12011:SF326">
    <property type="entry name" value="ADHESION G-PROTEIN COUPLED RECEPTOR G5"/>
    <property type="match status" value="1"/>
</dbReference>
<dbReference type="Pfam" id="PF00002">
    <property type="entry name" value="7tm_2"/>
    <property type="match status" value="1"/>
</dbReference>
<dbReference type="Pfam" id="PF01825">
    <property type="entry name" value="GPS"/>
    <property type="match status" value="1"/>
</dbReference>
<dbReference type="PRINTS" id="PR00249">
    <property type="entry name" value="GPCRSECRETIN"/>
</dbReference>
<dbReference type="PRINTS" id="PR01422">
    <property type="entry name" value="GPR56ORPHANR"/>
</dbReference>
<dbReference type="SMART" id="SM00303">
    <property type="entry name" value="GPS"/>
    <property type="match status" value="1"/>
</dbReference>
<dbReference type="PROSITE" id="PS50261">
    <property type="entry name" value="G_PROTEIN_RECEP_F2_4"/>
    <property type="match status" value="1"/>
</dbReference>
<dbReference type="PROSITE" id="PS50221">
    <property type="entry name" value="GAIN_B"/>
    <property type="match status" value="1"/>
</dbReference>
<organism>
    <name type="scientific">Homo sapiens</name>
    <name type="common">Human</name>
    <dbReference type="NCBI Taxonomy" id="9606"/>
    <lineage>
        <taxon>Eukaryota</taxon>
        <taxon>Metazoa</taxon>
        <taxon>Chordata</taxon>
        <taxon>Craniata</taxon>
        <taxon>Vertebrata</taxon>
        <taxon>Euteleostomi</taxon>
        <taxon>Mammalia</taxon>
        <taxon>Eutheria</taxon>
        <taxon>Euarchontoglires</taxon>
        <taxon>Primates</taxon>
        <taxon>Haplorrhini</taxon>
        <taxon>Catarrhini</taxon>
        <taxon>Hominidae</taxon>
        <taxon>Homo</taxon>
    </lineage>
</organism>
<evidence type="ECO:0000250" key="1">
    <source>
        <dbReference type="UniProtKB" id="Q3V3Z3"/>
    </source>
</evidence>
<evidence type="ECO:0000255" key="2"/>
<evidence type="ECO:0000255" key="3">
    <source>
        <dbReference type="PROSITE-ProRule" id="PRU00098"/>
    </source>
</evidence>
<evidence type="ECO:0000269" key="4">
    <source>
    </source>
</evidence>
<evidence type="ECO:0000269" key="5">
    <source>
    </source>
</evidence>
<evidence type="ECO:0000269" key="6">
    <source>
    </source>
</evidence>
<evidence type="ECO:0000303" key="7">
    <source>
    </source>
</evidence>
<evidence type="ECO:0000303" key="8">
    <source>
    </source>
</evidence>
<evidence type="ECO:0000303" key="9">
    <source>
    </source>
</evidence>
<evidence type="ECO:0000303" key="10">
    <source>
    </source>
</evidence>
<evidence type="ECO:0000305" key="11"/>
<evidence type="ECO:0000305" key="12">
    <source>
    </source>
</evidence>
<evidence type="ECO:0000312" key="13">
    <source>
        <dbReference type="HGNC" id="HGNC:19010"/>
    </source>
</evidence>
<evidence type="ECO:0007744" key="14">
    <source>
        <dbReference type="PDB" id="7EQ1"/>
    </source>
</evidence>
<evidence type="ECO:0007829" key="15">
    <source>
        <dbReference type="PDB" id="7EQ1"/>
    </source>
</evidence>
<gene>
    <name evidence="10 13" type="primary">ADGRG5</name>
    <name evidence="9" type="synonym">GPR114</name>
    <name type="synonym">PGR27</name>
    <name evidence="7" type="ORF">UNQ2524/PRO6017</name>
</gene>
<sequence>MDHCGALFLCLCLLTLQNATTETWEELLSYMENMQVSRGRSSVFSSRQLHQLEQMLLNTSFPGYNLTLQTPTIQSLAFKLSCDFSGLSLTSATLKRVPQAGGQHARGQHAMQFPAELTRDACKTRPRELRLICIYFSNTHFFKDENNSSLLNNYVLGAQLSHGHVNNLRDPVNISFWHNQSLEGYTLTCVFWKEGARKQPWGGWSPEGCRTEQPSHSQVLCRCNHLTYFAVLMQLSPALVPAELLAPLTYISLVGCSISIVASLITVLLHFHFRKQSDSLTRIHMNLHASVLLLNIAFLLSPAFAMSPVPGSACTALAAALHYALLSCLTWMAIEGFNLYLLLGRVYNIYIRRYVFKLGVLGWGAPALLVLLSLSVKSSVYGPCTIPVFDSWENGTGFQNMSICWVRSPVVHSVLVMGYGGLTSLFNLVVLAWALWTLRRLRERADAPSVRACHDTVTVLGLTVLLGTTWALAFFSFGVFLLPQLFLFTILNSLYGFFLFLWFCSQRCRSEAEAKAQIEAFSSSQTTQ</sequence>
<keyword id="KW-0002">3D-structure</keyword>
<keyword id="KW-1003">Cell membrane</keyword>
<keyword id="KW-1015">Disulfide bond</keyword>
<keyword id="KW-0297">G-protein coupled receptor</keyword>
<keyword id="KW-0325">Glycoprotein</keyword>
<keyword id="KW-0472">Membrane</keyword>
<keyword id="KW-1267">Proteomics identification</keyword>
<keyword id="KW-0675">Receptor</keyword>
<keyword id="KW-1185">Reference proteome</keyword>
<keyword id="KW-0732">Signal</keyword>
<keyword id="KW-0807">Transducer</keyword>
<keyword id="KW-0812">Transmembrane</keyword>
<keyword id="KW-1133">Transmembrane helix</keyword>